<organism>
    <name type="scientific">Thermotoga maritima (strain ATCC 43589 / DSM 3109 / JCM 10099 / NBRC 100826 / MSB8)</name>
    <dbReference type="NCBI Taxonomy" id="243274"/>
    <lineage>
        <taxon>Bacteria</taxon>
        <taxon>Thermotogati</taxon>
        <taxon>Thermotogota</taxon>
        <taxon>Thermotogae</taxon>
        <taxon>Thermotogales</taxon>
        <taxon>Thermotogaceae</taxon>
        <taxon>Thermotoga</taxon>
    </lineage>
</organism>
<comment type="function">
    <text evidence="2">Part of an ATP-binding cassette (ABC) transport system involved in metal import (By similarity). Binds a metal with high affinity and specificity and delivers it to the membrane permease for translocation into the cytoplasm (By similarity).</text>
</comment>
<comment type="subcellular location">
    <subcellularLocation>
        <location evidence="4">Periplasm</location>
    </subcellularLocation>
</comment>
<comment type="similarity">
    <text evidence="4">Belongs to the bacterial solute-binding protein 9 family.</text>
</comment>
<reference key="1">
    <citation type="journal article" date="1999" name="Nature">
        <title>Evidence for lateral gene transfer between Archaea and Bacteria from genome sequence of Thermotoga maritima.</title>
        <authorList>
            <person name="Nelson K.E."/>
            <person name="Clayton R.A."/>
            <person name="Gill S.R."/>
            <person name="Gwinn M.L."/>
            <person name="Dodson R.J."/>
            <person name="Haft D.H."/>
            <person name="Hickey E.K."/>
            <person name="Peterson J.D."/>
            <person name="Nelson W.C."/>
            <person name="Ketchum K.A."/>
            <person name="McDonald L.A."/>
            <person name="Utterback T.R."/>
            <person name="Malek J.A."/>
            <person name="Linher K.D."/>
            <person name="Garrett M.M."/>
            <person name="Stewart A.M."/>
            <person name="Cotton M.D."/>
            <person name="Pratt M.S."/>
            <person name="Phillips C.A."/>
            <person name="Richardson D.L."/>
            <person name="Heidelberg J.F."/>
            <person name="Sutton G.G."/>
            <person name="Fleischmann R.D."/>
            <person name="Eisen J.A."/>
            <person name="White O."/>
            <person name="Salzberg S.L."/>
            <person name="Smith H.O."/>
            <person name="Venter J.C."/>
            <person name="Fraser C.M."/>
        </authorList>
    </citation>
    <scope>NUCLEOTIDE SEQUENCE [LARGE SCALE GENOMIC DNA]</scope>
    <source>
        <strain>ATCC 43589 / DSM 3109 / JCM 10099 / NBRC 100826 / MSB8</strain>
    </source>
</reference>
<name>Y123_THEMA</name>
<gene>
    <name type="ordered locus">TM_0123</name>
</gene>
<dbReference type="EMBL" id="AE000512">
    <property type="protein sequence ID" value="AAD35217.1"/>
    <property type="molecule type" value="Genomic_DNA"/>
</dbReference>
<dbReference type="PIR" id="C72415">
    <property type="entry name" value="C72415"/>
</dbReference>
<dbReference type="RefSeq" id="NP_227939.1">
    <property type="nucleotide sequence ID" value="NC_000853.1"/>
</dbReference>
<dbReference type="RefSeq" id="WP_004082706.1">
    <property type="nucleotide sequence ID" value="NC_000853.1"/>
</dbReference>
<dbReference type="SMR" id="Q9WXX7"/>
<dbReference type="FunCoup" id="Q9WXX7">
    <property type="interactions" value="107"/>
</dbReference>
<dbReference type="STRING" id="243274.TM_0123"/>
<dbReference type="PaxDb" id="243274-THEMA_04190"/>
<dbReference type="EnsemblBacteria" id="AAD35217">
    <property type="protein sequence ID" value="AAD35217"/>
    <property type="gene ID" value="TM_0123"/>
</dbReference>
<dbReference type="KEGG" id="tma:TM0123"/>
<dbReference type="KEGG" id="tmi:THEMA_04190"/>
<dbReference type="KEGG" id="tmm:Tmari_0121"/>
<dbReference type="KEGG" id="tmw:THMA_0119"/>
<dbReference type="eggNOG" id="COG0803">
    <property type="taxonomic scope" value="Bacteria"/>
</dbReference>
<dbReference type="InParanoid" id="Q9WXX7"/>
<dbReference type="OrthoDB" id="9810636at2"/>
<dbReference type="Proteomes" id="UP000008183">
    <property type="component" value="Chromosome"/>
</dbReference>
<dbReference type="GO" id="GO:0042597">
    <property type="term" value="C:periplasmic space"/>
    <property type="evidence" value="ECO:0007669"/>
    <property type="project" value="UniProtKB-SubCell"/>
</dbReference>
<dbReference type="GO" id="GO:0046872">
    <property type="term" value="F:metal ion binding"/>
    <property type="evidence" value="ECO:0007669"/>
    <property type="project" value="UniProtKB-KW"/>
</dbReference>
<dbReference type="GO" id="GO:0030001">
    <property type="term" value="P:metal ion transport"/>
    <property type="evidence" value="ECO:0007669"/>
    <property type="project" value="InterPro"/>
</dbReference>
<dbReference type="Gene3D" id="3.40.50.1980">
    <property type="entry name" value="Nitrogenase molybdenum iron protein domain"/>
    <property type="match status" value="2"/>
</dbReference>
<dbReference type="InterPro" id="IPR050492">
    <property type="entry name" value="Bact_metal-bind_prot9"/>
</dbReference>
<dbReference type="InterPro" id="IPR006127">
    <property type="entry name" value="ZnuA-like"/>
</dbReference>
<dbReference type="PANTHER" id="PTHR42953">
    <property type="entry name" value="HIGH-AFFINITY ZINC UPTAKE SYSTEM PROTEIN ZNUA-RELATED"/>
    <property type="match status" value="1"/>
</dbReference>
<dbReference type="PANTHER" id="PTHR42953:SF1">
    <property type="entry name" value="METAL-BINDING PROTEIN HI_0362-RELATED"/>
    <property type="match status" value="1"/>
</dbReference>
<dbReference type="Pfam" id="PF01297">
    <property type="entry name" value="ZnuA"/>
    <property type="match status" value="1"/>
</dbReference>
<dbReference type="SUPFAM" id="SSF53807">
    <property type="entry name" value="Helical backbone' metal receptor"/>
    <property type="match status" value="1"/>
</dbReference>
<feature type="signal peptide" evidence="3">
    <location>
        <begin position="1"/>
        <end position="15"/>
    </location>
</feature>
<feature type="chain" id="PRO_0000031906" description="Putative metal-binding protein TM_0123">
    <location>
        <begin position="16"/>
        <end position="267"/>
    </location>
</feature>
<feature type="binding site" evidence="1">
    <location>
        <position position="53"/>
    </location>
    <ligand>
        <name>a divalent metal cation</name>
        <dbReference type="ChEBI" id="CHEBI:60240"/>
    </ligand>
</feature>
<feature type="binding site" evidence="1">
    <location>
        <position position="107"/>
    </location>
    <ligand>
        <name>a divalent metal cation</name>
        <dbReference type="ChEBI" id="CHEBI:60240"/>
    </ligand>
</feature>
<feature type="binding site" evidence="1">
    <location>
        <position position="172"/>
    </location>
    <ligand>
        <name>a divalent metal cation</name>
        <dbReference type="ChEBI" id="CHEBI:60240"/>
    </ligand>
</feature>
<keyword id="KW-0479">Metal-binding</keyword>
<keyword id="KW-0574">Periplasm</keyword>
<keyword id="KW-1185">Reference proteome</keyword>
<keyword id="KW-0732">Signal</keyword>
<keyword id="KW-0813">Transport</keyword>
<accession>Q9WXX7</accession>
<protein>
    <recommendedName>
        <fullName>Putative metal-binding protein TM_0123</fullName>
    </recommendedName>
</protein>
<sequence>MKKILLLLVLIVAVLNFGKTIVTTINPYYLIVSQLLGDTASVKLLVPPGANPHLFSLKPSDAKTLEEADLIVANGLGLEPYLEKYREKTVFVSDFIPALLLIDDNPHIWLDPFFLKYYIVPGLYQVLIEKFPEKQSEIKQKAEEIVSGLDTVIRDSFKALLPYTGKTVVMAHPSFTYFFKEFGLELITLSSGHEHSTSFSTIKEILRKKEQIVALFREPQQPAEILSSLEKELRMKSFVLDPLGVNGEKTIVELLRKNLSVIQEALK</sequence>
<evidence type="ECO:0000250" key="1">
    <source>
        <dbReference type="UniProtKB" id="P39172"/>
    </source>
</evidence>
<evidence type="ECO:0000250" key="2">
    <source>
        <dbReference type="UniProtKB" id="Q56952"/>
    </source>
</evidence>
<evidence type="ECO:0000255" key="3"/>
<evidence type="ECO:0000305" key="4"/>
<proteinExistence type="inferred from homology"/>